<proteinExistence type="inferred from homology"/>
<name>HUTG_LEGPL</name>
<dbReference type="EC" id="3.5.3.8" evidence="1"/>
<dbReference type="EMBL" id="CR628337">
    <property type="protein sequence ID" value="CAH14980.1"/>
    <property type="molecule type" value="Genomic_DNA"/>
</dbReference>
<dbReference type="RefSeq" id="WP_011214919.1">
    <property type="nucleotide sequence ID" value="NC_006369.1"/>
</dbReference>
<dbReference type="SMR" id="Q5WYJ0"/>
<dbReference type="KEGG" id="lpf:lpl0746"/>
<dbReference type="LegioList" id="lpl0746"/>
<dbReference type="HOGENOM" id="CLU_039478_2_0_6"/>
<dbReference type="UniPathway" id="UPA00379">
    <property type="reaction ID" value="UER00552"/>
</dbReference>
<dbReference type="Proteomes" id="UP000002517">
    <property type="component" value="Chromosome"/>
</dbReference>
<dbReference type="GO" id="GO:0008783">
    <property type="term" value="F:agmatinase activity"/>
    <property type="evidence" value="ECO:0007669"/>
    <property type="project" value="TreeGrafter"/>
</dbReference>
<dbReference type="GO" id="GO:0050415">
    <property type="term" value="F:formimidoylglutamase activity"/>
    <property type="evidence" value="ECO:0007669"/>
    <property type="project" value="UniProtKB-UniRule"/>
</dbReference>
<dbReference type="GO" id="GO:0030145">
    <property type="term" value="F:manganese ion binding"/>
    <property type="evidence" value="ECO:0007669"/>
    <property type="project" value="UniProtKB-UniRule"/>
</dbReference>
<dbReference type="GO" id="GO:0019556">
    <property type="term" value="P:L-histidine catabolic process to glutamate and formamide"/>
    <property type="evidence" value="ECO:0007669"/>
    <property type="project" value="UniProtKB-UniPathway"/>
</dbReference>
<dbReference type="GO" id="GO:0019557">
    <property type="term" value="P:L-histidine catabolic process to glutamate and formate"/>
    <property type="evidence" value="ECO:0007669"/>
    <property type="project" value="UniProtKB-UniPathway"/>
</dbReference>
<dbReference type="GO" id="GO:0033389">
    <property type="term" value="P:putrescine biosynthetic process from arginine, via agmatine"/>
    <property type="evidence" value="ECO:0007669"/>
    <property type="project" value="TreeGrafter"/>
</dbReference>
<dbReference type="CDD" id="cd09988">
    <property type="entry name" value="Formimidoylglutamase"/>
    <property type="match status" value="1"/>
</dbReference>
<dbReference type="Gene3D" id="3.40.800.10">
    <property type="entry name" value="Ureohydrolase domain"/>
    <property type="match status" value="1"/>
</dbReference>
<dbReference type="HAMAP" id="MF_00737">
    <property type="entry name" value="Formimidoylglutam"/>
    <property type="match status" value="1"/>
</dbReference>
<dbReference type="InterPro" id="IPR005923">
    <property type="entry name" value="HutG"/>
</dbReference>
<dbReference type="InterPro" id="IPR006035">
    <property type="entry name" value="Ureohydrolase"/>
</dbReference>
<dbReference type="InterPro" id="IPR023696">
    <property type="entry name" value="Ureohydrolase_dom_sf"/>
</dbReference>
<dbReference type="NCBIfam" id="TIGR01227">
    <property type="entry name" value="hutG"/>
    <property type="match status" value="1"/>
</dbReference>
<dbReference type="PANTHER" id="PTHR11358">
    <property type="entry name" value="ARGINASE/AGMATINASE"/>
    <property type="match status" value="1"/>
</dbReference>
<dbReference type="PANTHER" id="PTHR11358:SF35">
    <property type="entry name" value="FORMIMIDOYLGLUTAMASE"/>
    <property type="match status" value="1"/>
</dbReference>
<dbReference type="Pfam" id="PF00491">
    <property type="entry name" value="Arginase"/>
    <property type="match status" value="1"/>
</dbReference>
<dbReference type="PIRSF" id="PIRSF036979">
    <property type="entry name" value="Arginase"/>
    <property type="match status" value="1"/>
</dbReference>
<dbReference type="SUPFAM" id="SSF52768">
    <property type="entry name" value="Arginase/deacetylase"/>
    <property type="match status" value="1"/>
</dbReference>
<dbReference type="PROSITE" id="PS51409">
    <property type="entry name" value="ARGINASE_2"/>
    <property type="match status" value="1"/>
</dbReference>
<evidence type="ECO:0000255" key="1">
    <source>
        <dbReference type="HAMAP-Rule" id="MF_00737"/>
    </source>
</evidence>
<reference key="1">
    <citation type="journal article" date="2004" name="Nat. Genet.">
        <title>Evidence in the Legionella pneumophila genome for exploitation of host cell functions and high genome plasticity.</title>
        <authorList>
            <person name="Cazalet C."/>
            <person name="Rusniok C."/>
            <person name="Brueggemann H."/>
            <person name="Zidane N."/>
            <person name="Magnier A."/>
            <person name="Ma L."/>
            <person name="Tichit M."/>
            <person name="Jarraud S."/>
            <person name="Bouchier C."/>
            <person name="Vandenesch F."/>
            <person name="Kunst F."/>
            <person name="Etienne J."/>
            <person name="Glaser P."/>
            <person name="Buchrieser C."/>
        </authorList>
    </citation>
    <scope>NUCLEOTIDE SEQUENCE [LARGE SCALE GENOMIC DNA]</scope>
    <source>
        <strain>Lens</strain>
    </source>
</reference>
<keyword id="KW-0369">Histidine metabolism</keyword>
<keyword id="KW-0378">Hydrolase</keyword>
<keyword id="KW-0464">Manganese</keyword>
<keyword id="KW-0479">Metal-binding</keyword>
<organism>
    <name type="scientific">Legionella pneumophila (strain Lens)</name>
    <dbReference type="NCBI Taxonomy" id="297245"/>
    <lineage>
        <taxon>Bacteria</taxon>
        <taxon>Pseudomonadati</taxon>
        <taxon>Pseudomonadota</taxon>
        <taxon>Gammaproteobacteria</taxon>
        <taxon>Legionellales</taxon>
        <taxon>Legionellaceae</taxon>
        <taxon>Legionella</taxon>
    </lineage>
</organism>
<feature type="chain" id="PRO_0000173759" description="Formimidoylglutamase">
    <location>
        <begin position="1"/>
        <end position="319"/>
    </location>
</feature>
<feature type="binding site" evidence="1">
    <location>
        <position position="131"/>
    </location>
    <ligand>
        <name>Mn(2+)</name>
        <dbReference type="ChEBI" id="CHEBI:29035"/>
        <label>1</label>
    </ligand>
</feature>
<feature type="binding site" evidence="1">
    <location>
        <position position="154"/>
    </location>
    <ligand>
        <name>Mn(2+)</name>
        <dbReference type="ChEBI" id="CHEBI:29035"/>
        <label>1</label>
    </ligand>
</feature>
<feature type="binding site" evidence="1">
    <location>
        <position position="154"/>
    </location>
    <ligand>
        <name>Mn(2+)</name>
        <dbReference type="ChEBI" id="CHEBI:29035"/>
        <label>2</label>
    </ligand>
</feature>
<feature type="binding site" evidence="1">
    <location>
        <position position="156"/>
    </location>
    <ligand>
        <name>Mn(2+)</name>
        <dbReference type="ChEBI" id="CHEBI:29035"/>
        <label>2</label>
    </ligand>
</feature>
<feature type="binding site" evidence="1">
    <location>
        <position position="158"/>
    </location>
    <ligand>
        <name>Mn(2+)</name>
        <dbReference type="ChEBI" id="CHEBI:29035"/>
        <label>1</label>
    </ligand>
</feature>
<feature type="binding site" evidence="1">
    <location>
        <position position="248"/>
    </location>
    <ligand>
        <name>Mn(2+)</name>
        <dbReference type="ChEBI" id="CHEBI:29035"/>
        <label>1</label>
    </ligand>
</feature>
<feature type="binding site" evidence="1">
    <location>
        <position position="248"/>
    </location>
    <ligand>
        <name>Mn(2+)</name>
        <dbReference type="ChEBI" id="CHEBI:29035"/>
        <label>2</label>
    </ligand>
</feature>
<feature type="binding site" evidence="1">
    <location>
        <position position="250"/>
    </location>
    <ligand>
        <name>Mn(2+)</name>
        <dbReference type="ChEBI" id="CHEBI:29035"/>
        <label>2</label>
    </ligand>
</feature>
<protein>
    <recommendedName>
        <fullName evidence="1">Formimidoylglutamase</fullName>
        <ecNumber evidence="1">3.5.3.8</ecNumber>
    </recommendedName>
    <alternativeName>
        <fullName evidence="1">Formiminoglutamase</fullName>
    </alternativeName>
    <alternativeName>
        <fullName evidence="1">Formiminoglutamate hydrolase</fullName>
    </alternativeName>
</protein>
<gene>
    <name evidence="1" type="primary">hutG</name>
    <name type="ordered locus">lpl0746</name>
</gene>
<sequence>MFDDLSNYRPANPALWQGRKDTANQERFFQKITFIDNQNELMTKDKKTIFLGFASDAGIKRNLGRTGAKLGPDQIKTQLAKLPCHNNKHYVDLGNVICENDELELSQSQFAQIVHFCHENGHQICAFGGGHEIAWAHYQGLSSLYPKLGVINFDAHFDLRPYKKGELGNSGTPFSQIATYCEEKKMPFHYCCIGVQKFGNTPSLFEKAKKLNVSYLSAEDLYEQSQAWQIAFLDDFILNLDHIYLTICLDVLAECYAPGVSAPQALGLSPWQIMPLLKYLIQSGKVVSLDIAELSPPLDSELKTARLAALIIAELLDTN</sequence>
<accession>Q5WYJ0</accession>
<comment type="function">
    <text evidence="1">Catalyzes the conversion of N-formimidoyl-L-glutamate to L-glutamate and formamide.</text>
</comment>
<comment type="catalytic activity">
    <reaction evidence="1">
        <text>N-formimidoyl-L-glutamate + H2O = formamide + L-glutamate</text>
        <dbReference type="Rhea" id="RHEA:22492"/>
        <dbReference type="ChEBI" id="CHEBI:15377"/>
        <dbReference type="ChEBI" id="CHEBI:16397"/>
        <dbReference type="ChEBI" id="CHEBI:29985"/>
        <dbReference type="ChEBI" id="CHEBI:58928"/>
        <dbReference type="EC" id="3.5.3.8"/>
    </reaction>
</comment>
<comment type="cofactor">
    <cofactor evidence="1">
        <name>Mn(2+)</name>
        <dbReference type="ChEBI" id="CHEBI:29035"/>
    </cofactor>
    <text evidence="1">Binds 2 manganese ions per subunit.</text>
</comment>
<comment type="pathway">
    <text evidence="1">Amino-acid degradation; L-histidine degradation into L-glutamate; L-glutamate from N-formimidoyl-L-glutamate (hydrolase route): step 1/1.</text>
</comment>
<comment type="similarity">
    <text evidence="1">Belongs to the arginase family.</text>
</comment>